<gene>
    <name evidence="1" type="primary">deoB</name>
    <name type="ordered locus">E2348C_4681</name>
</gene>
<dbReference type="EC" id="5.4.2.7" evidence="1"/>
<dbReference type="EMBL" id="FM180568">
    <property type="protein sequence ID" value="CAS12229.1"/>
    <property type="molecule type" value="Genomic_DNA"/>
</dbReference>
<dbReference type="RefSeq" id="WP_000816478.1">
    <property type="nucleotide sequence ID" value="NC_011601.1"/>
</dbReference>
<dbReference type="SMR" id="B7UR11"/>
<dbReference type="KEGG" id="ecg:E2348C_4681"/>
<dbReference type="HOGENOM" id="CLU_053861_0_0_6"/>
<dbReference type="UniPathway" id="UPA00002">
    <property type="reaction ID" value="UER00467"/>
</dbReference>
<dbReference type="Proteomes" id="UP000008205">
    <property type="component" value="Chromosome"/>
</dbReference>
<dbReference type="GO" id="GO:0005829">
    <property type="term" value="C:cytosol"/>
    <property type="evidence" value="ECO:0007669"/>
    <property type="project" value="TreeGrafter"/>
</dbReference>
<dbReference type="GO" id="GO:0000287">
    <property type="term" value="F:magnesium ion binding"/>
    <property type="evidence" value="ECO:0007669"/>
    <property type="project" value="InterPro"/>
</dbReference>
<dbReference type="GO" id="GO:0030145">
    <property type="term" value="F:manganese ion binding"/>
    <property type="evidence" value="ECO:0007669"/>
    <property type="project" value="UniProtKB-UniRule"/>
</dbReference>
<dbReference type="GO" id="GO:0008973">
    <property type="term" value="F:phosphopentomutase activity"/>
    <property type="evidence" value="ECO:0007669"/>
    <property type="project" value="UniProtKB-UniRule"/>
</dbReference>
<dbReference type="GO" id="GO:0006018">
    <property type="term" value="P:2-deoxyribose 1-phosphate catabolic process"/>
    <property type="evidence" value="ECO:0007669"/>
    <property type="project" value="UniProtKB-UniRule"/>
</dbReference>
<dbReference type="GO" id="GO:0006015">
    <property type="term" value="P:5-phosphoribose 1-diphosphate biosynthetic process"/>
    <property type="evidence" value="ECO:0007669"/>
    <property type="project" value="UniProtKB-UniPathway"/>
</dbReference>
<dbReference type="GO" id="GO:0043094">
    <property type="term" value="P:metabolic compound salvage"/>
    <property type="evidence" value="ECO:0007669"/>
    <property type="project" value="InterPro"/>
</dbReference>
<dbReference type="GO" id="GO:0009117">
    <property type="term" value="P:nucleotide metabolic process"/>
    <property type="evidence" value="ECO:0007669"/>
    <property type="project" value="InterPro"/>
</dbReference>
<dbReference type="CDD" id="cd16009">
    <property type="entry name" value="PPM"/>
    <property type="match status" value="1"/>
</dbReference>
<dbReference type="FunFam" id="3.30.70.1250:FF:000001">
    <property type="entry name" value="Phosphopentomutase"/>
    <property type="match status" value="1"/>
</dbReference>
<dbReference type="Gene3D" id="3.40.720.10">
    <property type="entry name" value="Alkaline Phosphatase, subunit A"/>
    <property type="match status" value="1"/>
</dbReference>
<dbReference type="Gene3D" id="3.30.70.1250">
    <property type="entry name" value="Phosphopentomutase"/>
    <property type="match status" value="1"/>
</dbReference>
<dbReference type="HAMAP" id="MF_00740">
    <property type="entry name" value="Phosphopentomut"/>
    <property type="match status" value="1"/>
</dbReference>
<dbReference type="InterPro" id="IPR017850">
    <property type="entry name" value="Alkaline_phosphatase_core_sf"/>
</dbReference>
<dbReference type="InterPro" id="IPR010045">
    <property type="entry name" value="DeoB"/>
</dbReference>
<dbReference type="InterPro" id="IPR006124">
    <property type="entry name" value="Metalloenzyme"/>
</dbReference>
<dbReference type="InterPro" id="IPR024052">
    <property type="entry name" value="Phosphopentomutase_DeoB_cap_sf"/>
</dbReference>
<dbReference type="NCBIfam" id="TIGR01696">
    <property type="entry name" value="deoB"/>
    <property type="match status" value="1"/>
</dbReference>
<dbReference type="NCBIfam" id="NF003766">
    <property type="entry name" value="PRK05362.1"/>
    <property type="match status" value="1"/>
</dbReference>
<dbReference type="PANTHER" id="PTHR21110">
    <property type="entry name" value="PHOSPHOPENTOMUTASE"/>
    <property type="match status" value="1"/>
</dbReference>
<dbReference type="PANTHER" id="PTHR21110:SF0">
    <property type="entry name" value="PHOSPHOPENTOMUTASE"/>
    <property type="match status" value="1"/>
</dbReference>
<dbReference type="Pfam" id="PF01676">
    <property type="entry name" value="Metalloenzyme"/>
    <property type="match status" value="1"/>
</dbReference>
<dbReference type="PIRSF" id="PIRSF001491">
    <property type="entry name" value="Ppentomutase"/>
    <property type="match status" value="1"/>
</dbReference>
<dbReference type="SUPFAM" id="SSF53649">
    <property type="entry name" value="Alkaline phosphatase-like"/>
    <property type="match status" value="1"/>
</dbReference>
<dbReference type="SUPFAM" id="SSF143856">
    <property type="entry name" value="DeoB insert domain-like"/>
    <property type="match status" value="1"/>
</dbReference>
<comment type="function">
    <text evidence="1">Isomerase that catalyzes the conversion of deoxy-ribose 1-phosphate (dRib-1-P) and ribose 1-phosphate (Rib-1-P) to deoxy-ribose 5-phosphate (dRib-5-P) and ribose 5-phosphate (Rib-5-P), respectively.</text>
</comment>
<comment type="catalytic activity">
    <reaction evidence="1">
        <text>2-deoxy-alpha-D-ribose 1-phosphate = 2-deoxy-D-ribose 5-phosphate</text>
        <dbReference type="Rhea" id="RHEA:27658"/>
        <dbReference type="ChEBI" id="CHEBI:57259"/>
        <dbReference type="ChEBI" id="CHEBI:62877"/>
        <dbReference type="EC" id="5.4.2.7"/>
    </reaction>
</comment>
<comment type="catalytic activity">
    <reaction evidence="1">
        <text>alpha-D-ribose 1-phosphate = D-ribose 5-phosphate</text>
        <dbReference type="Rhea" id="RHEA:18793"/>
        <dbReference type="ChEBI" id="CHEBI:57720"/>
        <dbReference type="ChEBI" id="CHEBI:78346"/>
        <dbReference type="EC" id="5.4.2.7"/>
    </reaction>
</comment>
<comment type="cofactor">
    <cofactor evidence="1">
        <name>Mn(2+)</name>
        <dbReference type="ChEBI" id="CHEBI:29035"/>
    </cofactor>
    <text evidence="1">Binds 2 manganese ions.</text>
</comment>
<comment type="pathway">
    <text evidence="1">Carbohydrate degradation; 2-deoxy-D-ribose 1-phosphate degradation; D-glyceraldehyde 3-phosphate and acetaldehyde from 2-deoxy-alpha-D-ribose 1-phosphate: step 1/2.</text>
</comment>
<comment type="subcellular location">
    <subcellularLocation>
        <location evidence="1">Cytoplasm</location>
    </subcellularLocation>
</comment>
<comment type="similarity">
    <text evidence="1">Belongs to the phosphopentomutase family.</text>
</comment>
<protein>
    <recommendedName>
        <fullName evidence="1">Phosphopentomutase</fullName>
        <ecNumber evidence="1">5.4.2.7</ecNumber>
    </recommendedName>
    <alternativeName>
        <fullName evidence="1">Phosphodeoxyribomutase</fullName>
    </alternativeName>
</protein>
<accession>B7UR11</accession>
<keyword id="KW-0963">Cytoplasm</keyword>
<keyword id="KW-0413">Isomerase</keyword>
<keyword id="KW-0464">Manganese</keyword>
<keyword id="KW-0479">Metal-binding</keyword>
<keyword id="KW-1185">Reference proteome</keyword>
<reference key="1">
    <citation type="journal article" date="2009" name="J. Bacteriol.">
        <title>Complete genome sequence and comparative genome analysis of enteropathogenic Escherichia coli O127:H6 strain E2348/69.</title>
        <authorList>
            <person name="Iguchi A."/>
            <person name="Thomson N.R."/>
            <person name="Ogura Y."/>
            <person name="Saunders D."/>
            <person name="Ooka T."/>
            <person name="Henderson I.R."/>
            <person name="Harris D."/>
            <person name="Asadulghani M."/>
            <person name="Kurokawa K."/>
            <person name="Dean P."/>
            <person name="Kenny B."/>
            <person name="Quail M.A."/>
            <person name="Thurston S."/>
            <person name="Dougan G."/>
            <person name="Hayashi T."/>
            <person name="Parkhill J."/>
            <person name="Frankel G."/>
        </authorList>
    </citation>
    <scope>NUCLEOTIDE SEQUENCE [LARGE SCALE GENOMIC DNA]</scope>
    <source>
        <strain>E2348/69 / EPEC</strain>
    </source>
</reference>
<organism>
    <name type="scientific">Escherichia coli O127:H6 (strain E2348/69 / EPEC)</name>
    <dbReference type="NCBI Taxonomy" id="574521"/>
    <lineage>
        <taxon>Bacteria</taxon>
        <taxon>Pseudomonadati</taxon>
        <taxon>Pseudomonadota</taxon>
        <taxon>Gammaproteobacteria</taxon>
        <taxon>Enterobacterales</taxon>
        <taxon>Enterobacteriaceae</taxon>
        <taxon>Escherichia</taxon>
    </lineage>
</organism>
<evidence type="ECO:0000255" key="1">
    <source>
        <dbReference type="HAMAP-Rule" id="MF_00740"/>
    </source>
</evidence>
<sequence length="407" mass="44369">MKRAFIMVLDSFGIGATEDAERFGDVGADTLGHIAEACAKGEADNGRKGPLNLPNLTRLGLAKAHEGSTGFIPAGMDGNAEVIGAYAWAHEMSSGKDTPSGHWEIAGVPVLFEWGYFSDHENSFPQELLDKLVERANLPGYLGNCHSSGTVILDQLGEEHMKTGKPIFYTSADSVFQIACHEETFGLDKLYKLCEIAREELTNGGYNIGRVIARPFIGDKAGNFQRTGNRHDLAVEPPAPTVLQKLVDEKHGQVVSVGKIADIYANCGITKKVKATGLDALFDATIKEMKEAGDNTIVFTNFVDFDSSWGHRRDVAGYAAGLELFDRRLPELMSLLRDDDILILTADHGCDPTWTGTDHTREHIPVLVYGPKVKPGSLGHRETFADIGQTLAKYFGTSDMEYGKAMF</sequence>
<proteinExistence type="inferred from homology"/>
<feature type="chain" id="PRO_1000148242" description="Phosphopentomutase">
    <location>
        <begin position="1"/>
        <end position="407"/>
    </location>
</feature>
<feature type="binding site" evidence="1">
    <location>
        <position position="10"/>
    </location>
    <ligand>
        <name>Mn(2+)</name>
        <dbReference type="ChEBI" id="CHEBI:29035"/>
        <label>1</label>
    </ligand>
</feature>
<feature type="binding site" evidence="1">
    <location>
        <position position="306"/>
    </location>
    <ligand>
        <name>Mn(2+)</name>
        <dbReference type="ChEBI" id="CHEBI:29035"/>
        <label>2</label>
    </ligand>
</feature>
<feature type="binding site" evidence="1">
    <location>
        <position position="311"/>
    </location>
    <ligand>
        <name>Mn(2+)</name>
        <dbReference type="ChEBI" id="CHEBI:29035"/>
        <label>2</label>
    </ligand>
</feature>
<feature type="binding site" evidence="1">
    <location>
        <position position="347"/>
    </location>
    <ligand>
        <name>Mn(2+)</name>
        <dbReference type="ChEBI" id="CHEBI:29035"/>
        <label>1</label>
    </ligand>
</feature>
<feature type="binding site" evidence="1">
    <location>
        <position position="348"/>
    </location>
    <ligand>
        <name>Mn(2+)</name>
        <dbReference type="ChEBI" id="CHEBI:29035"/>
        <label>1</label>
    </ligand>
</feature>
<feature type="binding site" evidence="1">
    <location>
        <position position="359"/>
    </location>
    <ligand>
        <name>Mn(2+)</name>
        <dbReference type="ChEBI" id="CHEBI:29035"/>
        <label>2</label>
    </ligand>
</feature>
<name>DEOB_ECO27</name>